<feature type="chain" id="PRO_1000060194" description="Na(+)-translocating NADH-quinone reductase subunit E">
    <location>
        <begin position="1"/>
        <end position="198"/>
    </location>
</feature>
<feature type="transmembrane region" description="Helical" evidence="1">
    <location>
        <begin position="11"/>
        <end position="31"/>
    </location>
</feature>
<feature type="transmembrane region" description="Helical" evidence="1">
    <location>
        <begin position="35"/>
        <end position="55"/>
    </location>
</feature>
<feature type="transmembrane region" description="Helical" evidence="1">
    <location>
        <begin position="77"/>
        <end position="97"/>
    </location>
</feature>
<feature type="transmembrane region" description="Helical" evidence="1">
    <location>
        <begin position="110"/>
        <end position="130"/>
    </location>
</feature>
<feature type="transmembrane region" description="Helical" evidence="1">
    <location>
        <begin position="140"/>
        <end position="160"/>
    </location>
</feature>
<feature type="transmembrane region" description="Helical" evidence="1">
    <location>
        <begin position="176"/>
        <end position="196"/>
    </location>
</feature>
<sequence>MEHYISLFVKSVFIENMALSFFLGMCTFLAVSKKVSTAFGLGVAVTVVLGISVPVNQLVYSLILKDGALIDGVDLSFLNFITFIGVIAALVQILEMILDKYFPALYNALGIFLPLITVNCAIFGGVSFMVQRDYNFAESVVYGIGAGTGWMLAIVALAGITEKMKYADVPAGLRGLGITFITVGLMALGFMSFSGVQL</sequence>
<gene>
    <name evidence="1" type="primary">nqrE</name>
    <name type="ordered locus">HS_1689</name>
</gene>
<name>NQRE_HISS1</name>
<evidence type="ECO:0000255" key="1">
    <source>
        <dbReference type="HAMAP-Rule" id="MF_00429"/>
    </source>
</evidence>
<organism>
    <name type="scientific">Histophilus somni (strain 129Pt)</name>
    <name type="common">Haemophilus somnus</name>
    <dbReference type="NCBI Taxonomy" id="205914"/>
    <lineage>
        <taxon>Bacteria</taxon>
        <taxon>Pseudomonadati</taxon>
        <taxon>Pseudomonadota</taxon>
        <taxon>Gammaproteobacteria</taxon>
        <taxon>Pasteurellales</taxon>
        <taxon>Pasteurellaceae</taxon>
        <taxon>Histophilus</taxon>
    </lineage>
</organism>
<reference key="1">
    <citation type="journal article" date="2007" name="J. Bacteriol.">
        <title>Complete genome sequence of Haemophilus somnus (Histophilus somni) strain 129Pt and comparison to Haemophilus ducreyi 35000HP and Haemophilus influenzae Rd.</title>
        <authorList>
            <person name="Challacombe J.F."/>
            <person name="Duncan A.J."/>
            <person name="Brettin T.S."/>
            <person name="Bruce D."/>
            <person name="Chertkov O."/>
            <person name="Detter J.C."/>
            <person name="Han C.S."/>
            <person name="Misra M."/>
            <person name="Richardson P."/>
            <person name="Tapia R."/>
            <person name="Thayer N."/>
            <person name="Xie G."/>
            <person name="Inzana T.J."/>
        </authorList>
    </citation>
    <scope>NUCLEOTIDE SEQUENCE [LARGE SCALE GENOMIC DNA]</scope>
    <source>
        <strain>129Pt</strain>
    </source>
</reference>
<keyword id="KW-0997">Cell inner membrane</keyword>
<keyword id="KW-1003">Cell membrane</keyword>
<keyword id="KW-0406">Ion transport</keyword>
<keyword id="KW-0472">Membrane</keyword>
<keyword id="KW-0520">NAD</keyword>
<keyword id="KW-0915">Sodium</keyword>
<keyword id="KW-0739">Sodium transport</keyword>
<keyword id="KW-1278">Translocase</keyword>
<keyword id="KW-0812">Transmembrane</keyword>
<keyword id="KW-1133">Transmembrane helix</keyword>
<keyword id="KW-0813">Transport</keyword>
<keyword id="KW-0830">Ubiquinone</keyword>
<protein>
    <recommendedName>
        <fullName evidence="1">Na(+)-translocating NADH-quinone reductase subunit E</fullName>
        <shortName evidence="1">Na(+)-NQR subunit E</shortName>
        <shortName evidence="1">Na(+)-translocating NQR subunit E</shortName>
        <ecNumber evidence="1">7.2.1.1</ecNumber>
    </recommendedName>
    <alternativeName>
        <fullName evidence="1">NQR complex subunit E</fullName>
    </alternativeName>
    <alternativeName>
        <fullName evidence="1">NQR-1 subunit E</fullName>
    </alternativeName>
</protein>
<comment type="function">
    <text evidence="1">NQR complex catalyzes the reduction of ubiquinone-1 to ubiquinol by two successive reactions, coupled with the transport of Na(+) ions from the cytoplasm to the periplasm. NqrA to NqrE are probably involved in the second step, the conversion of ubisemiquinone to ubiquinol.</text>
</comment>
<comment type="catalytic activity">
    <reaction evidence="1">
        <text>a ubiquinone + n Na(+)(in) + NADH + H(+) = a ubiquinol + n Na(+)(out) + NAD(+)</text>
        <dbReference type="Rhea" id="RHEA:47748"/>
        <dbReference type="Rhea" id="RHEA-COMP:9565"/>
        <dbReference type="Rhea" id="RHEA-COMP:9566"/>
        <dbReference type="ChEBI" id="CHEBI:15378"/>
        <dbReference type="ChEBI" id="CHEBI:16389"/>
        <dbReference type="ChEBI" id="CHEBI:17976"/>
        <dbReference type="ChEBI" id="CHEBI:29101"/>
        <dbReference type="ChEBI" id="CHEBI:57540"/>
        <dbReference type="ChEBI" id="CHEBI:57945"/>
        <dbReference type="EC" id="7.2.1.1"/>
    </reaction>
</comment>
<comment type="subunit">
    <text evidence="1">Composed of six subunits; NqrA, NqrB, NqrC, NqrD, NqrE and NqrF.</text>
</comment>
<comment type="subcellular location">
    <subcellularLocation>
        <location evidence="1">Cell inner membrane</location>
        <topology evidence="1">Multi-pass membrane protein</topology>
    </subcellularLocation>
</comment>
<comment type="similarity">
    <text evidence="1">Belongs to the NqrDE/RnfAE family.</text>
</comment>
<proteinExistence type="inferred from homology"/>
<dbReference type="EC" id="7.2.1.1" evidence="1"/>
<dbReference type="EMBL" id="CP000436">
    <property type="protein sequence ID" value="ABI25957.1"/>
    <property type="molecule type" value="Genomic_DNA"/>
</dbReference>
<dbReference type="SMR" id="Q0I5Y0"/>
<dbReference type="KEGG" id="hso:HS_1689"/>
<dbReference type="eggNOG" id="COG2209">
    <property type="taxonomic scope" value="Bacteria"/>
</dbReference>
<dbReference type="HOGENOM" id="CLU_095255_0_0_6"/>
<dbReference type="GO" id="GO:0009276">
    <property type="term" value="C:Gram-negative-bacterium-type cell wall"/>
    <property type="evidence" value="ECO:0007669"/>
    <property type="project" value="InterPro"/>
</dbReference>
<dbReference type="GO" id="GO:0005886">
    <property type="term" value="C:plasma membrane"/>
    <property type="evidence" value="ECO:0007669"/>
    <property type="project" value="UniProtKB-SubCell"/>
</dbReference>
<dbReference type="GO" id="GO:0016655">
    <property type="term" value="F:oxidoreductase activity, acting on NAD(P)H, quinone or similar compound as acceptor"/>
    <property type="evidence" value="ECO:0007669"/>
    <property type="project" value="UniProtKB-UniRule"/>
</dbReference>
<dbReference type="GO" id="GO:0022904">
    <property type="term" value="P:respiratory electron transport chain"/>
    <property type="evidence" value="ECO:0007669"/>
    <property type="project" value="InterPro"/>
</dbReference>
<dbReference type="GO" id="GO:0006814">
    <property type="term" value="P:sodium ion transport"/>
    <property type="evidence" value="ECO:0007669"/>
    <property type="project" value="UniProtKB-UniRule"/>
</dbReference>
<dbReference type="HAMAP" id="MF_00429">
    <property type="entry name" value="NqrE"/>
    <property type="match status" value="1"/>
</dbReference>
<dbReference type="InterPro" id="IPR003667">
    <property type="entry name" value="NqrDE/RnfAE"/>
</dbReference>
<dbReference type="InterPro" id="IPR050133">
    <property type="entry name" value="NqrDE/RnfAE_oxidrdctase"/>
</dbReference>
<dbReference type="InterPro" id="IPR010967">
    <property type="entry name" value="NqrE"/>
</dbReference>
<dbReference type="NCBIfam" id="TIGR01940">
    <property type="entry name" value="nqrE"/>
    <property type="match status" value="1"/>
</dbReference>
<dbReference type="PANTHER" id="PTHR30335">
    <property type="entry name" value="INTEGRAL MEMBRANE PROTEIN OF SOXR-REDUCING COMPLEX"/>
    <property type="match status" value="1"/>
</dbReference>
<dbReference type="PANTHER" id="PTHR30335:SF1">
    <property type="entry name" value="NA(+)-TRANSLOCATING NADH-QUINONE REDUCTASE SUBUNIT E"/>
    <property type="match status" value="1"/>
</dbReference>
<dbReference type="Pfam" id="PF02508">
    <property type="entry name" value="Rnf-Nqr"/>
    <property type="match status" value="1"/>
</dbReference>
<dbReference type="PIRSF" id="PIRSF006102">
    <property type="entry name" value="NQR_DE"/>
    <property type="match status" value="1"/>
</dbReference>
<accession>Q0I5Y0</accession>